<keyword id="KW-0963">Cytoplasm</keyword>
<keyword id="KW-0501">Molybdenum cofactor biosynthesis</keyword>
<keyword id="KW-1185">Reference proteome</keyword>
<keyword id="KW-0808">Transferase</keyword>
<dbReference type="EC" id="2.8.1.12" evidence="1"/>
<dbReference type="EMBL" id="CH901307">
    <property type="protein sequence ID" value="EAT32294.1"/>
    <property type="molecule type" value="Genomic_DNA"/>
</dbReference>
<dbReference type="RefSeq" id="XP_001647626.1">
    <property type="nucleotide sequence ID" value="XM_001647576.1"/>
</dbReference>
<dbReference type="SMR" id="Q1DGL6"/>
<dbReference type="STRING" id="7159.Q1DGL6"/>
<dbReference type="PaxDb" id="7159-AAEL015584-PA"/>
<dbReference type="eggNOG" id="KOG3307">
    <property type="taxonomic scope" value="Eukaryota"/>
</dbReference>
<dbReference type="HOGENOM" id="CLU_089568_0_1_1"/>
<dbReference type="InParanoid" id="Q1DGL6"/>
<dbReference type="OMA" id="HERKSCC"/>
<dbReference type="PhylomeDB" id="Q1DGL6"/>
<dbReference type="UniPathway" id="UPA00344"/>
<dbReference type="Proteomes" id="UP000008820">
    <property type="component" value="Unassembled WGS sequence"/>
</dbReference>
<dbReference type="Proteomes" id="UP000682892">
    <property type="component" value="Unassembled WGS sequence"/>
</dbReference>
<dbReference type="GO" id="GO:1990140">
    <property type="term" value="C:molybdopterin synthase complex"/>
    <property type="evidence" value="ECO:0007669"/>
    <property type="project" value="UniProtKB-UniRule"/>
</dbReference>
<dbReference type="GO" id="GO:0030366">
    <property type="term" value="F:molybdopterin synthase activity"/>
    <property type="evidence" value="ECO:0007669"/>
    <property type="project" value="UniProtKB-UniRule"/>
</dbReference>
<dbReference type="GO" id="GO:0006777">
    <property type="term" value="P:Mo-molybdopterin cofactor biosynthetic process"/>
    <property type="evidence" value="ECO:0007669"/>
    <property type="project" value="UniProtKB-UniRule"/>
</dbReference>
<dbReference type="CDD" id="cd00756">
    <property type="entry name" value="MoaE"/>
    <property type="match status" value="1"/>
</dbReference>
<dbReference type="FunFam" id="3.90.1170.40:FF:000002">
    <property type="entry name" value="Molybdopterin synthase catalytic subunit"/>
    <property type="match status" value="1"/>
</dbReference>
<dbReference type="Gene3D" id="3.90.1170.40">
    <property type="entry name" value="Molybdopterin biosynthesis MoaE subunit"/>
    <property type="match status" value="1"/>
</dbReference>
<dbReference type="HAMAP" id="MF_03052">
    <property type="entry name" value="MOC2B"/>
    <property type="match status" value="1"/>
</dbReference>
<dbReference type="InterPro" id="IPR036563">
    <property type="entry name" value="MoaE_sf"/>
</dbReference>
<dbReference type="InterPro" id="IPR028888">
    <property type="entry name" value="MOCS2B_euk"/>
</dbReference>
<dbReference type="InterPro" id="IPR003448">
    <property type="entry name" value="Mopterin_biosynth_MoaE"/>
</dbReference>
<dbReference type="PANTHER" id="PTHR23404">
    <property type="entry name" value="MOLYBDOPTERIN SYNTHASE RELATED"/>
    <property type="match status" value="1"/>
</dbReference>
<dbReference type="Pfam" id="PF02391">
    <property type="entry name" value="MoaE"/>
    <property type="match status" value="1"/>
</dbReference>
<dbReference type="SUPFAM" id="SSF54690">
    <property type="entry name" value="Molybdopterin synthase subunit MoaE"/>
    <property type="match status" value="1"/>
</dbReference>
<proteinExistence type="inferred from homology"/>
<organism>
    <name type="scientific">Aedes aegypti</name>
    <name type="common">Yellowfever mosquito</name>
    <name type="synonym">Culex aegypti</name>
    <dbReference type="NCBI Taxonomy" id="7159"/>
    <lineage>
        <taxon>Eukaryota</taxon>
        <taxon>Metazoa</taxon>
        <taxon>Ecdysozoa</taxon>
        <taxon>Arthropoda</taxon>
        <taxon>Hexapoda</taxon>
        <taxon>Insecta</taxon>
        <taxon>Pterygota</taxon>
        <taxon>Neoptera</taxon>
        <taxon>Endopterygota</taxon>
        <taxon>Diptera</taxon>
        <taxon>Nematocera</taxon>
        <taxon>Culicoidea</taxon>
        <taxon>Culicidae</taxon>
        <taxon>Culicinae</taxon>
        <taxon>Aedini</taxon>
        <taxon>Aedes</taxon>
        <taxon>Stegomyia</taxon>
    </lineage>
</organism>
<comment type="function">
    <text evidence="1">Catalytic subunit of the molybdopterin synthase complex, a complex that catalyzes the conversion of precursor Z into molybdopterin. Acts by mediating the incorporation of 2 sulfur atoms from thiocarboxylated MOCS2A into precursor Z to generate a dithiolene group.</text>
</comment>
<comment type="catalytic activity">
    <reaction evidence="1">
        <text>2 [molybdopterin-synthase sulfur-carrier protein]-C-terminal-Gly-aminoethanethioate + cyclic pyranopterin phosphate + H2O = molybdopterin + 2 [molybdopterin-synthase sulfur-carrier protein]-C-terminal Gly-Gly + 2 H(+)</text>
        <dbReference type="Rhea" id="RHEA:26333"/>
        <dbReference type="Rhea" id="RHEA-COMP:12202"/>
        <dbReference type="Rhea" id="RHEA-COMP:19907"/>
        <dbReference type="ChEBI" id="CHEBI:15377"/>
        <dbReference type="ChEBI" id="CHEBI:15378"/>
        <dbReference type="ChEBI" id="CHEBI:58698"/>
        <dbReference type="ChEBI" id="CHEBI:59648"/>
        <dbReference type="ChEBI" id="CHEBI:90778"/>
        <dbReference type="ChEBI" id="CHEBI:232372"/>
        <dbReference type="EC" id="2.8.1.12"/>
    </reaction>
</comment>
<comment type="pathway">
    <text evidence="1">Cofactor biosynthesis; molybdopterin biosynthesis.</text>
</comment>
<comment type="subunit">
    <text evidence="1">Heterotetramer; composed of 2 small (MOCS2A) and 2 large (MOCS2B) subunits.</text>
</comment>
<comment type="subcellular location">
    <subcellularLocation>
        <location evidence="1">Cytoplasm</location>
    </subcellularLocation>
</comment>
<comment type="miscellaneous">
    <text>This protein is produced by a bicistronic gene which also produces the large subunit (MOCS2A).</text>
</comment>
<comment type="similarity">
    <text evidence="1">Belongs to the MoaE family. MOCS2B subfamily.</text>
</comment>
<evidence type="ECO:0000255" key="1">
    <source>
        <dbReference type="HAMAP-Rule" id="MF_03052"/>
    </source>
</evidence>
<reference key="1">
    <citation type="journal article" date="2007" name="Science">
        <title>Genome sequence of Aedes aegypti, a major arbovirus vector.</title>
        <authorList>
            <person name="Nene V."/>
            <person name="Wortman J.R."/>
            <person name="Lawson D."/>
            <person name="Haas B.J."/>
            <person name="Kodira C.D."/>
            <person name="Tu Z.J."/>
            <person name="Loftus B.J."/>
            <person name="Xi Z."/>
            <person name="Megy K."/>
            <person name="Grabherr M."/>
            <person name="Ren Q."/>
            <person name="Zdobnov E.M."/>
            <person name="Lobo N.F."/>
            <person name="Campbell K.S."/>
            <person name="Brown S.E."/>
            <person name="Bonaldo M.F."/>
            <person name="Zhu J."/>
            <person name="Sinkins S.P."/>
            <person name="Hogenkamp D.G."/>
            <person name="Amedeo P."/>
            <person name="Arensburger P."/>
            <person name="Atkinson P.W."/>
            <person name="Bidwell S.L."/>
            <person name="Biedler J."/>
            <person name="Birney E."/>
            <person name="Bruggner R.V."/>
            <person name="Costas J."/>
            <person name="Coy M.R."/>
            <person name="Crabtree J."/>
            <person name="Crawford M."/>
            <person name="DeBruyn B."/>
            <person name="DeCaprio D."/>
            <person name="Eiglmeier K."/>
            <person name="Eisenstadt E."/>
            <person name="El-Dorry H."/>
            <person name="Gelbart W.M."/>
            <person name="Gomes S.L."/>
            <person name="Hammond M."/>
            <person name="Hannick L.I."/>
            <person name="Hogan J.R."/>
            <person name="Holmes M.H."/>
            <person name="Jaffe D."/>
            <person name="Johnston S.J."/>
            <person name="Kennedy R.C."/>
            <person name="Koo H."/>
            <person name="Kravitz S."/>
            <person name="Kriventseva E.V."/>
            <person name="Kulp D."/>
            <person name="Labutti K."/>
            <person name="Lee E."/>
            <person name="Li S."/>
            <person name="Lovin D.D."/>
            <person name="Mao C."/>
            <person name="Mauceli E."/>
            <person name="Menck C.F."/>
            <person name="Miller J.R."/>
            <person name="Montgomery P."/>
            <person name="Mori A."/>
            <person name="Nascimento A.L."/>
            <person name="Naveira H.F."/>
            <person name="Nusbaum C."/>
            <person name="O'Leary S.B."/>
            <person name="Orvis J."/>
            <person name="Pertea M."/>
            <person name="Quesneville H."/>
            <person name="Reidenbach K.R."/>
            <person name="Rogers Y.-H.C."/>
            <person name="Roth C.W."/>
            <person name="Schneider J.R."/>
            <person name="Schatz M."/>
            <person name="Shumway M."/>
            <person name="Stanke M."/>
            <person name="Stinson E.O."/>
            <person name="Tubio J.M.C."/>
            <person name="Vanzee J.P."/>
            <person name="Verjovski-Almeida S."/>
            <person name="Werner D."/>
            <person name="White O.R."/>
            <person name="Wyder S."/>
            <person name="Zeng Q."/>
            <person name="Zhao Q."/>
            <person name="Zhao Y."/>
            <person name="Hill C.A."/>
            <person name="Raikhel A.S."/>
            <person name="Soares M.B."/>
            <person name="Knudson D.L."/>
            <person name="Lee N.H."/>
            <person name="Galagan J."/>
            <person name="Salzberg S.L."/>
            <person name="Paulsen I.T."/>
            <person name="Dimopoulos G."/>
            <person name="Collins F.H."/>
            <person name="Bruce B."/>
            <person name="Fraser-Liggett C.M."/>
            <person name="Severson D.W."/>
        </authorList>
    </citation>
    <scope>NUCLEOTIDE SEQUENCE [LARGE SCALE GENOMIC DNA]</scope>
    <source>
        <strain>LVPib12</strain>
    </source>
</reference>
<feature type="chain" id="PRO_0000369330" description="Molybdopterin synthase catalytic subunit 2">
    <location>
        <begin position="1"/>
        <end position="155"/>
    </location>
</feature>
<feature type="binding site" evidence="1">
    <location>
        <begin position="101"/>
        <end position="102"/>
    </location>
    <ligand>
        <name>substrate</name>
    </ligand>
</feature>
<feature type="binding site" evidence="1">
    <location>
        <position position="117"/>
    </location>
    <ligand>
        <name>substrate</name>
    </ligand>
</feature>
<feature type="binding site" evidence="1">
    <location>
        <begin position="124"/>
        <end position="126"/>
    </location>
    <ligand>
        <name>substrate</name>
    </ligand>
</feature>
<sequence length="155" mass="17637">MNYLKLTFDKLEVGEINDLVAHESCGAISLFVGTTRDNFDGKTVVLLEYEAYEAMALKTMNQICEELRARWPDIKHIGIHHRLGTVPVKEASVVIAVSSPHRKSSLEAVHFAIDELKKSVPVWKKEQYAEGEGCSEWKENKECSWSKSHRDNHIL</sequence>
<protein>
    <recommendedName>
        <fullName evidence="1">Molybdopterin synthase catalytic subunit 2</fullName>
        <ecNumber evidence="1">2.8.1.12</ecNumber>
    </recommendedName>
    <alternativeName>
        <fullName evidence="1">Molybdenum cofactor synthesis protein 2 large subunit 2</fullName>
    </alternativeName>
    <alternativeName>
        <fullName evidence="1">Molybdenum cofactor synthesis protein 2B 2</fullName>
        <shortName evidence="1">MOCS2B 2</shortName>
    </alternativeName>
</protein>
<gene>
    <name evidence="1" type="primary">Mocs2-2</name>
    <name type="ORF">AAEL015584</name>
</gene>
<accession>Q1DGL6</accession>
<name>MO2B2_AEDAE</name>